<name>HGD_PSEPW</name>
<organism>
    <name type="scientific">Pseudomonas putida (strain W619)</name>
    <dbReference type="NCBI Taxonomy" id="390235"/>
    <lineage>
        <taxon>Bacteria</taxon>
        <taxon>Pseudomonadati</taxon>
        <taxon>Pseudomonadota</taxon>
        <taxon>Gammaproteobacteria</taxon>
        <taxon>Pseudomonadales</taxon>
        <taxon>Pseudomonadaceae</taxon>
        <taxon>Pseudomonas</taxon>
    </lineage>
</organism>
<proteinExistence type="inferred from homology"/>
<reference key="1">
    <citation type="submission" date="2008-02" db="EMBL/GenBank/DDBJ databases">
        <title>Complete sequence of Pseudomonas putida W619.</title>
        <authorList>
            <person name="Copeland A."/>
            <person name="Lucas S."/>
            <person name="Lapidus A."/>
            <person name="Barry K."/>
            <person name="Detter J.C."/>
            <person name="Glavina del Rio T."/>
            <person name="Dalin E."/>
            <person name="Tice H."/>
            <person name="Pitluck S."/>
            <person name="Chain P."/>
            <person name="Malfatti S."/>
            <person name="Shin M."/>
            <person name="Vergez L."/>
            <person name="Schmutz J."/>
            <person name="Larimer F."/>
            <person name="Land M."/>
            <person name="Hauser L."/>
            <person name="Kyrpides N."/>
            <person name="Kim E."/>
            <person name="Taghavi S."/>
            <person name="Vangronsveld D."/>
            <person name="van der Lelie D."/>
            <person name="Richardson P."/>
        </authorList>
    </citation>
    <scope>NUCLEOTIDE SEQUENCE [LARGE SCALE GENOMIC DNA]</scope>
    <source>
        <strain>W619</strain>
    </source>
</reference>
<evidence type="ECO:0000255" key="1">
    <source>
        <dbReference type="HAMAP-Rule" id="MF_00334"/>
    </source>
</evidence>
<accession>B1J390</accession>
<keyword id="KW-0223">Dioxygenase</keyword>
<keyword id="KW-0408">Iron</keyword>
<keyword id="KW-0479">Metal-binding</keyword>
<keyword id="KW-0560">Oxidoreductase</keyword>
<keyword id="KW-0585">Phenylalanine catabolism</keyword>
<keyword id="KW-0828">Tyrosine catabolism</keyword>
<protein>
    <recommendedName>
        <fullName evidence="1">Homogentisate 1,2-dioxygenase</fullName>
        <shortName evidence="1">HGDO</shortName>
        <ecNumber evidence="1">1.13.11.5</ecNumber>
    </recommendedName>
    <alternativeName>
        <fullName evidence="1">Homogentisate oxygenase</fullName>
    </alternativeName>
    <alternativeName>
        <fullName evidence="1">Homogentisic acid oxidase</fullName>
    </alternativeName>
    <alternativeName>
        <fullName evidence="1">Homogentisicase</fullName>
    </alternativeName>
</protein>
<comment type="function">
    <text evidence="1">Involved in the catabolism of homogentisate (2,5-dihydroxyphenylacetate or 2,5-OH-PhAc), a central intermediate in the degradation of phenylalanine and tyrosine. Catalyzes the oxidative ring cleavage of the aromatic ring of homogentisate to yield maleylacetoacetate.</text>
</comment>
<comment type="catalytic activity">
    <reaction evidence="1">
        <text>homogentisate + O2 = 4-maleylacetoacetate + H(+)</text>
        <dbReference type="Rhea" id="RHEA:15449"/>
        <dbReference type="ChEBI" id="CHEBI:15378"/>
        <dbReference type="ChEBI" id="CHEBI:15379"/>
        <dbReference type="ChEBI" id="CHEBI:16169"/>
        <dbReference type="ChEBI" id="CHEBI:17105"/>
        <dbReference type="EC" id="1.13.11.5"/>
    </reaction>
</comment>
<comment type="cofactor">
    <cofactor evidence="1">
        <name>Fe cation</name>
        <dbReference type="ChEBI" id="CHEBI:24875"/>
    </cofactor>
</comment>
<comment type="pathway">
    <text evidence="1">Amino-acid degradation; L-phenylalanine degradation; acetoacetate and fumarate from L-phenylalanine: step 4/6.</text>
</comment>
<comment type="subunit">
    <text evidence="1">Hexamer; dimer of trimers.</text>
</comment>
<comment type="similarity">
    <text evidence="1">Belongs to the homogentisate dioxygenase family.</text>
</comment>
<sequence>MNRDTSPDLQYLSGFGNEFASEALPGALPVGQNSPQKAPYGLYAELLSGTAFTMARSELRRTWLYRIRPSALHPRFERLARQPLNGPLGGVTPNRLRWNPQPLPTEPTDFIEGWLPMVANSAADKPAGVSVYIYCANRSMERVFFNADGELLIVPEQGRLRIATELGLLEVEPQEIAVVPRGMKFRVELPDGQARGYIAENHGAPLRLPDLGPIGSNGLANPRDFLAPVAHYEEAEGPVQLVQKFLGEHWACELQHSPLDVVAWHGSNVPYKYDLRRFNTLGTVSFDHPDPSIFTVLTSPTSVHGLANMDFVIFPPRWMVAENTFRPPWFHRNLMNEFMGLISGAYDAKAEGFLPGGASLHGVMSAHGPDAETCEKAIAADLAPHKIDNTMAFMFETSQVLRPSLQALECPQLQADYDSCWATLPSTFNPNRR</sequence>
<feature type="chain" id="PRO_1000119846" description="Homogentisate 1,2-dioxygenase">
    <location>
        <begin position="1"/>
        <end position="433"/>
    </location>
</feature>
<feature type="active site" description="Proton acceptor" evidence="1">
    <location>
        <position position="288"/>
    </location>
</feature>
<feature type="binding site" evidence="1">
    <location>
        <position position="331"/>
    </location>
    <ligand>
        <name>Fe cation</name>
        <dbReference type="ChEBI" id="CHEBI:24875"/>
    </ligand>
</feature>
<feature type="binding site" evidence="1">
    <location>
        <position position="337"/>
    </location>
    <ligand>
        <name>Fe cation</name>
        <dbReference type="ChEBI" id="CHEBI:24875"/>
    </ligand>
</feature>
<feature type="binding site" evidence="1">
    <location>
        <position position="346"/>
    </location>
    <ligand>
        <name>homogentisate</name>
        <dbReference type="ChEBI" id="CHEBI:16169"/>
    </ligand>
</feature>
<feature type="binding site" evidence="1">
    <location>
        <position position="367"/>
    </location>
    <ligand>
        <name>Fe cation</name>
        <dbReference type="ChEBI" id="CHEBI:24875"/>
    </ligand>
</feature>
<feature type="binding site" evidence="1">
    <location>
        <position position="367"/>
    </location>
    <ligand>
        <name>homogentisate</name>
        <dbReference type="ChEBI" id="CHEBI:16169"/>
    </ligand>
</feature>
<gene>
    <name evidence="1" type="primary">hmgA</name>
    <name type="ordered locus">PputW619_0817</name>
</gene>
<dbReference type="EC" id="1.13.11.5" evidence="1"/>
<dbReference type="EMBL" id="CP000949">
    <property type="protein sequence ID" value="ACA71322.1"/>
    <property type="molecule type" value="Genomic_DNA"/>
</dbReference>
<dbReference type="SMR" id="B1J390"/>
<dbReference type="STRING" id="390235.PputW619_0817"/>
<dbReference type="KEGG" id="ppw:PputW619_0817"/>
<dbReference type="eggNOG" id="COG3508">
    <property type="taxonomic scope" value="Bacteria"/>
</dbReference>
<dbReference type="HOGENOM" id="CLU_027174_0_0_6"/>
<dbReference type="OrthoDB" id="9811253at2"/>
<dbReference type="UniPathway" id="UPA00139">
    <property type="reaction ID" value="UER00339"/>
</dbReference>
<dbReference type="GO" id="GO:0005737">
    <property type="term" value="C:cytoplasm"/>
    <property type="evidence" value="ECO:0007669"/>
    <property type="project" value="TreeGrafter"/>
</dbReference>
<dbReference type="GO" id="GO:0004411">
    <property type="term" value="F:homogentisate 1,2-dioxygenase activity"/>
    <property type="evidence" value="ECO:0007669"/>
    <property type="project" value="UniProtKB-UniRule"/>
</dbReference>
<dbReference type="GO" id="GO:0005506">
    <property type="term" value="F:iron ion binding"/>
    <property type="evidence" value="ECO:0007669"/>
    <property type="project" value="UniProtKB-UniRule"/>
</dbReference>
<dbReference type="GO" id="GO:0006559">
    <property type="term" value="P:L-phenylalanine catabolic process"/>
    <property type="evidence" value="ECO:0007669"/>
    <property type="project" value="UniProtKB-UniRule"/>
</dbReference>
<dbReference type="GO" id="GO:0006572">
    <property type="term" value="P:tyrosine catabolic process"/>
    <property type="evidence" value="ECO:0007669"/>
    <property type="project" value="UniProtKB-UniRule"/>
</dbReference>
<dbReference type="CDD" id="cd07000">
    <property type="entry name" value="cupin_HGO_N"/>
    <property type="match status" value="1"/>
</dbReference>
<dbReference type="FunFam" id="2.60.120.10:FF:000036">
    <property type="entry name" value="Homogentisate 1,2-dioxygenase"/>
    <property type="match status" value="1"/>
</dbReference>
<dbReference type="Gene3D" id="2.60.120.10">
    <property type="entry name" value="Jelly Rolls"/>
    <property type="match status" value="1"/>
</dbReference>
<dbReference type="HAMAP" id="MF_00334">
    <property type="entry name" value="Homogentis_dioxygen"/>
    <property type="match status" value="1"/>
</dbReference>
<dbReference type="InterPro" id="IPR046451">
    <property type="entry name" value="HgmA_C"/>
</dbReference>
<dbReference type="InterPro" id="IPR046452">
    <property type="entry name" value="HgmA_N"/>
</dbReference>
<dbReference type="InterPro" id="IPR005708">
    <property type="entry name" value="Homogentis_dOase"/>
</dbReference>
<dbReference type="InterPro" id="IPR022950">
    <property type="entry name" value="Homogentis_dOase_bac"/>
</dbReference>
<dbReference type="InterPro" id="IPR014710">
    <property type="entry name" value="RmlC-like_jellyroll"/>
</dbReference>
<dbReference type="InterPro" id="IPR011051">
    <property type="entry name" value="RmlC_Cupin_sf"/>
</dbReference>
<dbReference type="NCBIfam" id="TIGR01015">
    <property type="entry name" value="hmgA"/>
    <property type="match status" value="1"/>
</dbReference>
<dbReference type="PANTHER" id="PTHR11056">
    <property type="entry name" value="HOMOGENTISATE 1,2-DIOXYGENASE"/>
    <property type="match status" value="1"/>
</dbReference>
<dbReference type="PANTHER" id="PTHR11056:SF0">
    <property type="entry name" value="HOMOGENTISATE 1,2-DIOXYGENASE"/>
    <property type="match status" value="1"/>
</dbReference>
<dbReference type="Pfam" id="PF04209">
    <property type="entry name" value="HgmA_C"/>
    <property type="match status" value="1"/>
</dbReference>
<dbReference type="Pfam" id="PF20510">
    <property type="entry name" value="HgmA_N"/>
    <property type="match status" value="1"/>
</dbReference>
<dbReference type="SUPFAM" id="SSF51182">
    <property type="entry name" value="RmlC-like cupins"/>
    <property type="match status" value="1"/>
</dbReference>